<comment type="function">
    <text evidence="1">Presumably involved in the processing and regular turnover of intracellular proteins. Catalyzes the removal of unsubstituted N-terminal amino acids from various peptides.</text>
</comment>
<comment type="catalytic activity">
    <reaction evidence="1">
        <text>Release of an N-terminal amino acid, Xaa-|-Yaa-, in which Xaa is preferably Leu, but may be other amino acids including Pro although not Arg or Lys, and Yaa may be Pro. Amino acid amides and methyl esters are also readily hydrolyzed, but rates on arylamides are exceedingly low.</text>
        <dbReference type="EC" id="3.4.11.1"/>
    </reaction>
</comment>
<comment type="catalytic activity">
    <reaction evidence="1">
        <text>Release of an N-terminal amino acid, preferentially leucine, but not glutamic or aspartic acids.</text>
        <dbReference type="EC" id="3.4.11.10"/>
    </reaction>
</comment>
<comment type="cofactor">
    <cofactor evidence="1">
        <name>Mn(2+)</name>
        <dbReference type="ChEBI" id="CHEBI:29035"/>
    </cofactor>
    <text evidence="1">Binds 2 manganese ions per subunit.</text>
</comment>
<comment type="subcellular location">
    <subcellularLocation>
        <location evidence="1">Cytoplasm</location>
    </subcellularLocation>
</comment>
<comment type="similarity">
    <text evidence="1">Belongs to the peptidase M17 family.</text>
</comment>
<organism>
    <name type="scientific">Brucella melitensis biotype 1 (strain ATCC 23456 / CCUG 17765 / NCTC 10094 / 16M)</name>
    <dbReference type="NCBI Taxonomy" id="224914"/>
    <lineage>
        <taxon>Bacteria</taxon>
        <taxon>Pseudomonadati</taxon>
        <taxon>Pseudomonadota</taxon>
        <taxon>Alphaproteobacteria</taxon>
        <taxon>Hyphomicrobiales</taxon>
        <taxon>Brucellaceae</taxon>
        <taxon>Brucella/Ochrobactrum group</taxon>
        <taxon>Brucella</taxon>
    </lineage>
</organism>
<accession>Q8YG99</accession>
<feature type="chain" id="PRO_0000165728" description="Probable cytosol aminopeptidase">
    <location>
        <begin position="1"/>
        <end position="485"/>
    </location>
</feature>
<feature type="active site" evidence="1">
    <location>
        <position position="263"/>
    </location>
</feature>
<feature type="active site" evidence="1">
    <location>
        <position position="337"/>
    </location>
</feature>
<feature type="binding site" evidence="1">
    <location>
        <position position="251"/>
    </location>
    <ligand>
        <name>Mn(2+)</name>
        <dbReference type="ChEBI" id="CHEBI:29035"/>
        <label>2</label>
    </ligand>
</feature>
<feature type="binding site" evidence="1">
    <location>
        <position position="256"/>
    </location>
    <ligand>
        <name>Mn(2+)</name>
        <dbReference type="ChEBI" id="CHEBI:29035"/>
        <label>1</label>
    </ligand>
</feature>
<feature type="binding site" evidence="1">
    <location>
        <position position="256"/>
    </location>
    <ligand>
        <name>Mn(2+)</name>
        <dbReference type="ChEBI" id="CHEBI:29035"/>
        <label>2</label>
    </ligand>
</feature>
<feature type="binding site" evidence="1">
    <location>
        <position position="274"/>
    </location>
    <ligand>
        <name>Mn(2+)</name>
        <dbReference type="ChEBI" id="CHEBI:29035"/>
        <label>2</label>
    </ligand>
</feature>
<feature type="binding site" evidence="1">
    <location>
        <position position="333"/>
    </location>
    <ligand>
        <name>Mn(2+)</name>
        <dbReference type="ChEBI" id="CHEBI:29035"/>
        <label>1</label>
    </ligand>
</feature>
<feature type="binding site" evidence="1">
    <location>
        <position position="335"/>
    </location>
    <ligand>
        <name>Mn(2+)</name>
        <dbReference type="ChEBI" id="CHEBI:29035"/>
        <label>1</label>
    </ligand>
</feature>
<feature type="binding site" evidence="1">
    <location>
        <position position="335"/>
    </location>
    <ligand>
        <name>Mn(2+)</name>
        <dbReference type="ChEBI" id="CHEBI:29035"/>
        <label>2</label>
    </ligand>
</feature>
<reference key="1">
    <citation type="journal article" date="2002" name="Proc. Natl. Acad. Sci. U.S.A.">
        <title>The genome sequence of the facultative intracellular pathogen Brucella melitensis.</title>
        <authorList>
            <person name="DelVecchio V.G."/>
            <person name="Kapatral V."/>
            <person name="Redkar R.J."/>
            <person name="Patra G."/>
            <person name="Mujer C."/>
            <person name="Los T."/>
            <person name="Ivanova N."/>
            <person name="Anderson I."/>
            <person name="Bhattacharyya A."/>
            <person name="Lykidis A."/>
            <person name="Reznik G."/>
            <person name="Jablonski L."/>
            <person name="Larsen N."/>
            <person name="D'Souza M."/>
            <person name="Bernal A."/>
            <person name="Mazur M."/>
            <person name="Goltsman E."/>
            <person name="Selkov E."/>
            <person name="Elzer P.H."/>
            <person name="Hagius S."/>
            <person name="O'Callaghan D."/>
            <person name="Letesson J.-J."/>
            <person name="Haselkorn R."/>
            <person name="Kyrpides N.C."/>
            <person name="Overbeek R."/>
        </authorList>
    </citation>
    <scope>NUCLEOTIDE SEQUENCE [LARGE SCALE GENOMIC DNA]</scope>
    <source>
        <strain>ATCC 23456 / CCUG 17765 / NCTC 10094 / 16M</strain>
    </source>
</reference>
<gene>
    <name evidence="1" type="primary">pepA</name>
    <name type="ordered locus">BMEI1261</name>
</gene>
<sequence>MKYRKRGWPSCWWPRAAVLPMRRQGVGGAEKIVRIADISGFTGALGKTAEAIETTPAGVEKIVLVGVGEPGKLGNDDWLKIGGAAFSQIGNAERVTLTLALPETTIAGDEAADVALGMVLRSYKFDRYKTRKSEENGEPKHAAKITVCVADTHSARKAFEVAEAVADGVIQARNLVNEPANILGPVEFAEEAEKLEKLGVKVEVLGEKELKKLGMGALLGVAQGSVRPPRLVVMEWHGAKGKEKPIAFVGKGVVFDTGGISIKPAANMEDMKGDMGGAAAVTGLMRALAGRKAKVNAIGVIGLVENMPDGNAQRPGDIVTSMSGQTIEVINTDAEGRLVLADALHYTNDRFKPRFIINLATLTGAVMVALGQYHAGLFSNDDELADQLYDAGQSTGEKLWRLPLGTEYDKMIDSKFADMKNSAGRYGGSITAAQFLKRFVGETPWAHLDVAGTAMGSPANEYNQSWASGFGVRLLDRLVRDQFES</sequence>
<dbReference type="EC" id="3.4.11.1" evidence="1"/>
<dbReference type="EC" id="3.4.11.10" evidence="1"/>
<dbReference type="EMBL" id="AE008917">
    <property type="protein sequence ID" value="AAL52442.1"/>
    <property type="molecule type" value="Genomic_DNA"/>
</dbReference>
<dbReference type="PIR" id="AG3409">
    <property type="entry name" value="AG3409"/>
</dbReference>
<dbReference type="SMR" id="Q8YG99"/>
<dbReference type="KEGG" id="bme:BMEI1261"/>
<dbReference type="eggNOG" id="COG0260">
    <property type="taxonomic scope" value="Bacteria"/>
</dbReference>
<dbReference type="Proteomes" id="UP000000419">
    <property type="component" value="Chromosome I"/>
</dbReference>
<dbReference type="GO" id="GO:0005737">
    <property type="term" value="C:cytoplasm"/>
    <property type="evidence" value="ECO:0007669"/>
    <property type="project" value="UniProtKB-SubCell"/>
</dbReference>
<dbReference type="GO" id="GO:0030145">
    <property type="term" value="F:manganese ion binding"/>
    <property type="evidence" value="ECO:0007669"/>
    <property type="project" value="UniProtKB-UniRule"/>
</dbReference>
<dbReference type="GO" id="GO:0070006">
    <property type="term" value="F:metalloaminopeptidase activity"/>
    <property type="evidence" value="ECO:0007669"/>
    <property type="project" value="InterPro"/>
</dbReference>
<dbReference type="GO" id="GO:0006508">
    <property type="term" value="P:proteolysis"/>
    <property type="evidence" value="ECO:0007669"/>
    <property type="project" value="UniProtKB-KW"/>
</dbReference>
<dbReference type="CDD" id="cd00433">
    <property type="entry name" value="Peptidase_M17"/>
    <property type="match status" value="1"/>
</dbReference>
<dbReference type="Gene3D" id="3.40.220.10">
    <property type="entry name" value="Leucine Aminopeptidase, subunit E, domain 1"/>
    <property type="match status" value="1"/>
</dbReference>
<dbReference type="Gene3D" id="3.40.630.10">
    <property type="entry name" value="Zn peptidases"/>
    <property type="match status" value="1"/>
</dbReference>
<dbReference type="HAMAP" id="MF_00181">
    <property type="entry name" value="Cytosol_peptidase_M17"/>
    <property type="match status" value="1"/>
</dbReference>
<dbReference type="InterPro" id="IPR011356">
    <property type="entry name" value="Leucine_aapep/pepB"/>
</dbReference>
<dbReference type="InterPro" id="IPR043472">
    <property type="entry name" value="Macro_dom-like"/>
</dbReference>
<dbReference type="InterPro" id="IPR000819">
    <property type="entry name" value="Peptidase_M17_C"/>
</dbReference>
<dbReference type="InterPro" id="IPR023042">
    <property type="entry name" value="Peptidase_M17_leu_NH2_pept"/>
</dbReference>
<dbReference type="InterPro" id="IPR008283">
    <property type="entry name" value="Peptidase_M17_N"/>
</dbReference>
<dbReference type="NCBIfam" id="NF002073">
    <property type="entry name" value="PRK00913.1-2"/>
    <property type="match status" value="1"/>
</dbReference>
<dbReference type="NCBIfam" id="NF002074">
    <property type="entry name" value="PRK00913.1-4"/>
    <property type="match status" value="1"/>
</dbReference>
<dbReference type="NCBIfam" id="NF002075">
    <property type="entry name" value="PRK00913.2-2"/>
    <property type="match status" value="1"/>
</dbReference>
<dbReference type="NCBIfam" id="NF002077">
    <property type="entry name" value="PRK00913.2-4"/>
    <property type="match status" value="1"/>
</dbReference>
<dbReference type="NCBIfam" id="NF002083">
    <property type="entry name" value="PRK00913.3-5"/>
    <property type="match status" value="1"/>
</dbReference>
<dbReference type="PANTHER" id="PTHR11963:SF23">
    <property type="entry name" value="CYTOSOL AMINOPEPTIDASE"/>
    <property type="match status" value="1"/>
</dbReference>
<dbReference type="PANTHER" id="PTHR11963">
    <property type="entry name" value="LEUCINE AMINOPEPTIDASE-RELATED"/>
    <property type="match status" value="1"/>
</dbReference>
<dbReference type="Pfam" id="PF00883">
    <property type="entry name" value="Peptidase_M17"/>
    <property type="match status" value="1"/>
</dbReference>
<dbReference type="Pfam" id="PF02789">
    <property type="entry name" value="Peptidase_M17_N"/>
    <property type="match status" value="1"/>
</dbReference>
<dbReference type="PRINTS" id="PR00481">
    <property type="entry name" value="LAMNOPPTDASE"/>
</dbReference>
<dbReference type="SUPFAM" id="SSF52949">
    <property type="entry name" value="Macro domain-like"/>
    <property type="match status" value="1"/>
</dbReference>
<dbReference type="SUPFAM" id="SSF53187">
    <property type="entry name" value="Zn-dependent exopeptidases"/>
    <property type="match status" value="1"/>
</dbReference>
<dbReference type="PROSITE" id="PS00631">
    <property type="entry name" value="CYTOSOL_AP"/>
    <property type="match status" value="1"/>
</dbReference>
<protein>
    <recommendedName>
        <fullName evidence="1">Probable cytosol aminopeptidase</fullName>
        <ecNumber evidence="1">3.4.11.1</ecNumber>
    </recommendedName>
    <alternativeName>
        <fullName evidence="1">Leucine aminopeptidase</fullName>
        <shortName evidence="1">LAP</shortName>
        <ecNumber evidence="1">3.4.11.10</ecNumber>
    </alternativeName>
    <alternativeName>
        <fullName evidence="1">Leucyl aminopeptidase</fullName>
    </alternativeName>
</protein>
<name>AMPA_BRUME</name>
<keyword id="KW-0031">Aminopeptidase</keyword>
<keyword id="KW-0963">Cytoplasm</keyword>
<keyword id="KW-0378">Hydrolase</keyword>
<keyword id="KW-0464">Manganese</keyword>
<keyword id="KW-0479">Metal-binding</keyword>
<keyword id="KW-0645">Protease</keyword>
<proteinExistence type="inferred from homology"/>
<evidence type="ECO:0000255" key="1">
    <source>
        <dbReference type="HAMAP-Rule" id="MF_00181"/>
    </source>
</evidence>